<keyword id="KW-0007">Acetylation</keyword>
<keyword id="KW-0963">Cytoplasm</keyword>
<keyword id="KW-0206">Cytoskeleton</keyword>
<keyword id="KW-0342">GTP-binding</keyword>
<keyword id="KW-0378">Hydrolase</keyword>
<keyword id="KW-0460">Magnesium</keyword>
<keyword id="KW-0479">Metal-binding</keyword>
<keyword id="KW-0493">Microtubule</keyword>
<keyword id="KW-0547">Nucleotide-binding</keyword>
<keyword id="KW-1185">Reference proteome</keyword>
<reference key="1">
    <citation type="submission" date="2003-07" db="EMBL/GenBank/DDBJ databases">
        <title>Cloning and expression of nine tubulin genes from elongating cotton fiber cells.</title>
        <authorList>
            <person name="Feng J.-X."/>
            <person name="Wei G."/>
            <person name="Wang L."/>
            <person name="Ji S.-J."/>
            <person name="Zhang T.-Z."/>
            <person name="Zhu Y.-X."/>
        </authorList>
    </citation>
    <scope>NUCLEOTIDE SEQUENCE [MRNA]</scope>
</reference>
<accession>Q6VAG1</accession>
<proteinExistence type="evidence at transcript level"/>
<organism>
    <name type="scientific">Gossypium hirsutum</name>
    <name type="common">Upland cotton</name>
    <name type="synonym">Gossypium mexicanum</name>
    <dbReference type="NCBI Taxonomy" id="3635"/>
    <lineage>
        <taxon>Eukaryota</taxon>
        <taxon>Viridiplantae</taxon>
        <taxon>Streptophyta</taxon>
        <taxon>Embryophyta</taxon>
        <taxon>Tracheophyta</taxon>
        <taxon>Spermatophyta</taxon>
        <taxon>Magnoliopsida</taxon>
        <taxon>eudicotyledons</taxon>
        <taxon>Gunneridae</taxon>
        <taxon>Pentapetalae</taxon>
        <taxon>rosids</taxon>
        <taxon>malvids</taxon>
        <taxon>Malvales</taxon>
        <taxon>Malvaceae</taxon>
        <taxon>Malvoideae</taxon>
        <taxon>Gossypium</taxon>
    </lineage>
</organism>
<name>TBA1_GOSHI</name>
<evidence type="ECO:0000250" key="1"/>
<evidence type="ECO:0000250" key="2">
    <source>
        <dbReference type="UniProtKB" id="P68363"/>
    </source>
</evidence>
<evidence type="ECO:0000256" key="3">
    <source>
        <dbReference type="SAM" id="MobiDB-lite"/>
    </source>
</evidence>
<evidence type="ECO:0000305" key="4"/>
<feature type="chain" id="PRO_0000048175" description="Tubulin alpha-1 chain">
    <location>
        <begin position="1"/>
        <end position="451"/>
    </location>
</feature>
<feature type="region of interest" description="Disordered" evidence="3">
    <location>
        <begin position="432"/>
        <end position="451"/>
    </location>
</feature>
<feature type="active site" evidence="2">
    <location>
        <position position="254"/>
    </location>
</feature>
<feature type="binding site" evidence="2">
    <location>
        <position position="11"/>
    </location>
    <ligand>
        <name>GTP</name>
        <dbReference type="ChEBI" id="CHEBI:37565"/>
    </ligand>
</feature>
<feature type="binding site" evidence="2">
    <location>
        <position position="71"/>
    </location>
    <ligand>
        <name>GTP</name>
        <dbReference type="ChEBI" id="CHEBI:37565"/>
    </ligand>
</feature>
<feature type="binding site" evidence="2">
    <location>
        <position position="71"/>
    </location>
    <ligand>
        <name>Mg(2+)</name>
        <dbReference type="ChEBI" id="CHEBI:18420"/>
    </ligand>
</feature>
<feature type="binding site" evidence="2">
    <location>
        <position position="144"/>
    </location>
    <ligand>
        <name>GTP</name>
        <dbReference type="ChEBI" id="CHEBI:37565"/>
    </ligand>
</feature>
<feature type="binding site" evidence="2">
    <location>
        <position position="145"/>
    </location>
    <ligand>
        <name>GTP</name>
        <dbReference type="ChEBI" id="CHEBI:37565"/>
    </ligand>
</feature>
<feature type="binding site" evidence="2">
    <location>
        <position position="179"/>
    </location>
    <ligand>
        <name>GTP</name>
        <dbReference type="ChEBI" id="CHEBI:37565"/>
    </ligand>
</feature>
<feature type="binding site" evidence="2">
    <location>
        <position position="206"/>
    </location>
    <ligand>
        <name>GTP</name>
        <dbReference type="ChEBI" id="CHEBI:37565"/>
    </ligand>
</feature>
<feature type="binding site" evidence="2">
    <location>
        <position position="228"/>
    </location>
    <ligand>
        <name>GTP</name>
        <dbReference type="ChEBI" id="CHEBI:37565"/>
    </ligand>
</feature>
<feature type="site" description="Involved in polymerization" evidence="1">
    <location>
        <position position="451"/>
    </location>
</feature>
<feature type="modified residue" description="N6-acetyllysine" evidence="1">
    <location>
        <position position="40"/>
    </location>
</feature>
<comment type="function">
    <text>Tubulin is the major constituent of microtubules, a cylinder consisting of laterally associated linear protofilaments composed of alpha- and beta-tubulin heterodimers. Microtubules grow by the addition of GTP-tubulin dimers to the microtubule end, where a stabilizing cap forms. Below the cap, tubulin dimers are in GDP-bound state, owing to GTPase activity of alpha-tubulin.</text>
</comment>
<comment type="catalytic activity">
    <reaction evidence="2">
        <text>GTP + H2O = GDP + phosphate + H(+)</text>
        <dbReference type="Rhea" id="RHEA:19669"/>
        <dbReference type="ChEBI" id="CHEBI:15377"/>
        <dbReference type="ChEBI" id="CHEBI:15378"/>
        <dbReference type="ChEBI" id="CHEBI:37565"/>
        <dbReference type="ChEBI" id="CHEBI:43474"/>
        <dbReference type="ChEBI" id="CHEBI:58189"/>
    </reaction>
    <physiologicalReaction direction="left-to-right" evidence="2">
        <dbReference type="Rhea" id="RHEA:19670"/>
    </physiologicalReaction>
</comment>
<comment type="cofactor">
    <cofactor evidence="2">
        <name>Mg(2+)</name>
        <dbReference type="ChEBI" id="CHEBI:18420"/>
    </cofactor>
</comment>
<comment type="subunit">
    <text>Dimer of alpha and beta chains. A typical microtubule is a hollow water-filled tube with an outer diameter of 25 nm and an inner diameter of 15 nM. Alpha-beta heterodimers associate head-to-tail to form protofilaments running lengthwise along the microtubule wall with the beta-tubulin subunit facing the microtubule plus end conferring a structural polarity. Microtubules usually have 13 protofilaments but different protofilament numbers can be found in some organisms and specialized cells.</text>
</comment>
<comment type="subcellular location">
    <subcellularLocation>
        <location>Cytoplasm</location>
        <location>Cytoskeleton</location>
    </subcellularLocation>
</comment>
<comment type="PTM">
    <text evidence="1">Undergoes a tyrosination/detyrosination cycle, the cyclic removal and re-addition of a C-terminal tyrosine residue by the enzymes tubulin tyrosine carboxypeptidase (TTCP) and tubulin tyrosine ligase (TTL), respectively.</text>
</comment>
<comment type="PTM">
    <text evidence="1">Acetylation of alpha chains at Lys-40 stabilizes microtubules and affects affinity and processivity of microtubule motors. This modification has a role in multiple cellular functions, ranging from cell motility, cell cycle progression or cell differentiation to intracellular trafficking and signaling (By similarity).</text>
</comment>
<comment type="similarity">
    <text evidence="4">Belongs to the tubulin family.</text>
</comment>
<sequence length="451" mass="49738">MRECISIHIGQAGIQVGNACWELYCLEHGIQPDGQMPSDKTVGGGDDAFYTFFSETGAGKHVPRAIFVDLEPTVIDEVRTGTYRQLFHPEQLISGKEDAANNFARGHYTIGKEIVDLCLDRIRKLADNCTGLQGFLVFSAVGGGTGSGLGSLLLERLSVDYGKKSKLGFTVYPSPQVSTSVVEPYNSVLSTHSLLEHTDVSVLLDNEAIYDICRRSLDIERPTYTNLNRLVSQVISSLTASLRFDGALNVDVTEFRTNLVPYPRIHFMLSSYAPVISAEKAYHEQLSVAEITNSAFEPSSMMAKCDPRHGKYMACCLMYRGDVVPKDVNAAVATIKTKRTIQFADWCPTGFKCGINYQPPTVVPGGDLAKVQRAVCMISNSTSVAEVFSRIDHKFDLMYAKRAFVHWYVGEGMEEGEFSEAREDLAALEKDYEEVGADSAEGDEEDEGDEY</sequence>
<dbReference type="EC" id="3.6.5.-" evidence="2"/>
<dbReference type="EMBL" id="AY345603">
    <property type="protein sequence ID" value="AAQ92661.1"/>
    <property type="molecule type" value="mRNA"/>
</dbReference>
<dbReference type="SMR" id="Q6VAG1"/>
<dbReference type="STRING" id="3635.Q6VAG1"/>
<dbReference type="PaxDb" id="3635-Q6VAG1"/>
<dbReference type="Proteomes" id="UP000189702">
    <property type="component" value="Unplaced"/>
</dbReference>
<dbReference type="GO" id="GO:0005737">
    <property type="term" value="C:cytoplasm"/>
    <property type="evidence" value="ECO:0000318"/>
    <property type="project" value="GO_Central"/>
</dbReference>
<dbReference type="GO" id="GO:0005874">
    <property type="term" value="C:microtubule"/>
    <property type="evidence" value="ECO:0000318"/>
    <property type="project" value="GO_Central"/>
</dbReference>
<dbReference type="GO" id="GO:0005525">
    <property type="term" value="F:GTP binding"/>
    <property type="evidence" value="ECO:0000318"/>
    <property type="project" value="GO_Central"/>
</dbReference>
<dbReference type="GO" id="GO:0016787">
    <property type="term" value="F:hydrolase activity"/>
    <property type="evidence" value="ECO:0007669"/>
    <property type="project" value="UniProtKB-KW"/>
</dbReference>
<dbReference type="GO" id="GO:0046872">
    <property type="term" value="F:metal ion binding"/>
    <property type="evidence" value="ECO:0007669"/>
    <property type="project" value="UniProtKB-KW"/>
</dbReference>
<dbReference type="GO" id="GO:0005200">
    <property type="term" value="F:structural constituent of cytoskeleton"/>
    <property type="evidence" value="ECO:0000318"/>
    <property type="project" value="GO_Central"/>
</dbReference>
<dbReference type="GO" id="GO:0000226">
    <property type="term" value="P:microtubule cytoskeleton organization"/>
    <property type="evidence" value="ECO:0000318"/>
    <property type="project" value="GO_Central"/>
</dbReference>
<dbReference type="GO" id="GO:0000278">
    <property type="term" value="P:mitotic cell cycle"/>
    <property type="evidence" value="ECO:0000318"/>
    <property type="project" value="GO_Central"/>
</dbReference>
<dbReference type="CDD" id="cd02186">
    <property type="entry name" value="alpha_tubulin"/>
    <property type="match status" value="1"/>
</dbReference>
<dbReference type="FunFam" id="1.10.287.600:FF:000005">
    <property type="entry name" value="Tubulin alpha chain"/>
    <property type="match status" value="1"/>
</dbReference>
<dbReference type="FunFam" id="3.30.1330.20:FF:000001">
    <property type="entry name" value="Tubulin alpha chain"/>
    <property type="match status" value="1"/>
</dbReference>
<dbReference type="FunFam" id="3.40.50.1440:FF:000004">
    <property type="entry name" value="Tubulin alpha chain"/>
    <property type="match status" value="1"/>
</dbReference>
<dbReference type="Gene3D" id="1.10.287.600">
    <property type="entry name" value="Helix hairpin bin"/>
    <property type="match status" value="1"/>
</dbReference>
<dbReference type="Gene3D" id="3.30.1330.20">
    <property type="entry name" value="Tubulin/FtsZ, C-terminal domain"/>
    <property type="match status" value="1"/>
</dbReference>
<dbReference type="Gene3D" id="3.40.50.1440">
    <property type="entry name" value="Tubulin/FtsZ, GTPase domain"/>
    <property type="match status" value="1"/>
</dbReference>
<dbReference type="InterPro" id="IPR002452">
    <property type="entry name" value="Alpha_tubulin"/>
</dbReference>
<dbReference type="InterPro" id="IPR008280">
    <property type="entry name" value="Tub_FtsZ_C"/>
</dbReference>
<dbReference type="InterPro" id="IPR000217">
    <property type="entry name" value="Tubulin"/>
</dbReference>
<dbReference type="InterPro" id="IPR037103">
    <property type="entry name" value="Tubulin/FtsZ-like_C"/>
</dbReference>
<dbReference type="InterPro" id="IPR018316">
    <property type="entry name" value="Tubulin/FtsZ_2-layer-sand-dom"/>
</dbReference>
<dbReference type="InterPro" id="IPR036525">
    <property type="entry name" value="Tubulin/FtsZ_GTPase_sf"/>
</dbReference>
<dbReference type="InterPro" id="IPR023123">
    <property type="entry name" value="Tubulin_C"/>
</dbReference>
<dbReference type="InterPro" id="IPR017975">
    <property type="entry name" value="Tubulin_CS"/>
</dbReference>
<dbReference type="InterPro" id="IPR003008">
    <property type="entry name" value="Tubulin_FtsZ_GTPase"/>
</dbReference>
<dbReference type="PANTHER" id="PTHR11588">
    <property type="entry name" value="TUBULIN"/>
    <property type="match status" value="1"/>
</dbReference>
<dbReference type="Pfam" id="PF00091">
    <property type="entry name" value="Tubulin"/>
    <property type="match status" value="1"/>
</dbReference>
<dbReference type="Pfam" id="PF03953">
    <property type="entry name" value="Tubulin_C"/>
    <property type="match status" value="1"/>
</dbReference>
<dbReference type="PRINTS" id="PR01162">
    <property type="entry name" value="ALPHATUBULIN"/>
</dbReference>
<dbReference type="PRINTS" id="PR01161">
    <property type="entry name" value="TUBULIN"/>
</dbReference>
<dbReference type="SMART" id="SM00864">
    <property type="entry name" value="Tubulin"/>
    <property type="match status" value="1"/>
</dbReference>
<dbReference type="SMART" id="SM00865">
    <property type="entry name" value="Tubulin_C"/>
    <property type="match status" value="1"/>
</dbReference>
<dbReference type="SUPFAM" id="SSF55307">
    <property type="entry name" value="Tubulin C-terminal domain-like"/>
    <property type="match status" value="1"/>
</dbReference>
<dbReference type="SUPFAM" id="SSF52490">
    <property type="entry name" value="Tubulin nucleotide-binding domain-like"/>
    <property type="match status" value="1"/>
</dbReference>
<dbReference type="PROSITE" id="PS00227">
    <property type="entry name" value="TUBULIN"/>
    <property type="match status" value="1"/>
</dbReference>
<protein>
    <recommendedName>
        <fullName>Tubulin alpha-1 chain</fullName>
        <ecNumber evidence="2">3.6.5.-</ecNumber>
    </recommendedName>
    <alternativeName>
        <fullName>Alpha-1-tubulin</fullName>
    </alternativeName>
</protein>